<gene>
    <name evidence="1" type="primary">xseB</name>
    <name type="ordered locus">Bcep1808_4255</name>
</gene>
<name>EX7S_BURVG</name>
<feature type="chain" id="PRO_1000019574" description="Exodeoxyribonuclease 7 small subunit">
    <location>
        <begin position="1"/>
        <end position="97"/>
    </location>
</feature>
<feature type="region of interest" description="Disordered" evidence="2">
    <location>
        <begin position="1"/>
        <end position="22"/>
    </location>
</feature>
<reference key="1">
    <citation type="submission" date="2007-03" db="EMBL/GenBank/DDBJ databases">
        <title>Complete sequence of chromosome 2 of Burkholderia vietnamiensis G4.</title>
        <authorList>
            <consortium name="US DOE Joint Genome Institute"/>
            <person name="Copeland A."/>
            <person name="Lucas S."/>
            <person name="Lapidus A."/>
            <person name="Barry K."/>
            <person name="Detter J.C."/>
            <person name="Glavina del Rio T."/>
            <person name="Hammon N."/>
            <person name="Israni S."/>
            <person name="Dalin E."/>
            <person name="Tice H."/>
            <person name="Pitluck S."/>
            <person name="Chain P."/>
            <person name="Malfatti S."/>
            <person name="Shin M."/>
            <person name="Vergez L."/>
            <person name="Schmutz J."/>
            <person name="Larimer F."/>
            <person name="Land M."/>
            <person name="Hauser L."/>
            <person name="Kyrpides N."/>
            <person name="Tiedje J."/>
            <person name="Richardson P."/>
        </authorList>
    </citation>
    <scope>NUCLEOTIDE SEQUENCE [LARGE SCALE GENOMIC DNA]</scope>
    <source>
        <strain>G4 / LMG 22486</strain>
    </source>
</reference>
<accession>A4JLT2</accession>
<dbReference type="EC" id="3.1.11.6" evidence="1"/>
<dbReference type="EMBL" id="CP000615">
    <property type="protein sequence ID" value="ABO57235.1"/>
    <property type="molecule type" value="Genomic_DNA"/>
</dbReference>
<dbReference type="SMR" id="A4JLT2"/>
<dbReference type="KEGG" id="bvi:Bcep1808_4255"/>
<dbReference type="eggNOG" id="COG1722">
    <property type="taxonomic scope" value="Bacteria"/>
</dbReference>
<dbReference type="HOGENOM" id="CLU_145918_2_0_4"/>
<dbReference type="Proteomes" id="UP000002287">
    <property type="component" value="Chromosome 2"/>
</dbReference>
<dbReference type="GO" id="GO:0005829">
    <property type="term" value="C:cytosol"/>
    <property type="evidence" value="ECO:0007669"/>
    <property type="project" value="TreeGrafter"/>
</dbReference>
<dbReference type="GO" id="GO:0009318">
    <property type="term" value="C:exodeoxyribonuclease VII complex"/>
    <property type="evidence" value="ECO:0007669"/>
    <property type="project" value="InterPro"/>
</dbReference>
<dbReference type="GO" id="GO:0008855">
    <property type="term" value="F:exodeoxyribonuclease VII activity"/>
    <property type="evidence" value="ECO:0007669"/>
    <property type="project" value="UniProtKB-UniRule"/>
</dbReference>
<dbReference type="GO" id="GO:0006308">
    <property type="term" value="P:DNA catabolic process"/>
    <property type="evidence" value="ECO:0007669"/>
    <property type="project" value="UniProtKB-UniRule"/>
</dbReference>
<dbReference type="Gene3D" id="1.10.287.1040">
    <property type="entry name" value="Exonuclease VII, small subunit"/>
    <property type="match status" value="1"/>
</dbReference>
<dbReference type="HAMAP" id="MF_00337">
    <property type="entry name" value="Exonuc_7_S"/>
    <property type="match status" value="1"/>
</dbReference>
<dbReference type="InterPro" id="IPR003761">
    <property type="entry name" value="Exonuc_VII_S"/>
</dbReference>
<dbReference type="InterPro" id="IPR037004">
    <property type="entry name" value="Exonuc_VII_ssu_sf"/>
</dbReference>
<dbReference type="NCBIfam" id="NF002141">
    <property type="entry name" value="PRK00977.1-5"/>
    <property type="match status" value="1"/>
</dbReference>
<dbReference type="NCBIfam" id="TIGR01280">
    <property type="entry name" value="xseB"/>
    <property type="match status" value="1"/>
</dbReference>
<dbReference type="PANTHER" id="PTHR34137">
    <property type="entry name" value="EXODEOXYRIBONUCLEASE 7 SMALL SUBUNIT"/>
    <property type="match status" value="1"/>
</dbReference>
<dbReference type="PANTHER" id="PTHR34137:SF1">
    <property type="entry name" value="EXODEOXYRIBONUCLEASE 7 SMALL SUBUNIT"/>
    <property type="match status" value="1"/>
</dbReference>
<dbReference type="Pfam" id="PF02609">
    <property type="entry name" value="Exonuc_VII_S"/>
    <property type="match status" value="1"/>
</dbReference>
<dbReference type="SUPFAM" id="SSF116842">
    <property type="entry name" value="XseB-like"/>
    <property type="match status" value="1"/>
</dbReference>
<protein>
    <recommendedName>
        <fullName evidence="1">Exodeoxyribonuclease 7 small subunit</fullName>
        <ecNumber evidence="1">3.1.11.6</ecNumber>
    </recommendedName>
    <alternativeName>
        <fullName evidence="1">Exodeoxyribonuclease VII small subunit</fullName>
        <shortName evidence="1">Exonuclease VII small subunit</shortName>
    </alternativeName>
</protein>
<proteinExistence type="inferred from homology"/>
<comment type="function">
    <text evidence="1">Bidirectionally degrades single-stranded DNA into large acid-insoluble oligonucleotides, which are then degraded further into small acid-soluble oligonucleotides.</text>
</comment>
<comment type="catalytic activity">
    <reaction evidence="1">
        <text>Exonucleolytic cleavage in either 5'- to 3'- or 3'- to 5'-direction to yield nucleoside 5'-phosphates.</text>
        <dbReference type="EC" id="3.1.11.6"/>
    </reaction>
</comment>
<comment type="subunit">
    <text evidence="1">Heterooligomer composed of large and small subunits.</text>
</comment>
<comment type="subcellular location">
    <subcellularLocation>
        <location evidence="1">Cytoplasm</location>
    </subcellularLocation>
</comment>
<comment type="similarity">
    <text evidence="1">Belongs to the XseB family.</text>
</comment>
<organism>
    <name type="scientific">Burkholderia vietnamiensis (strain G4 / LMG 22486)</name>
    <name type="common">Burkholderia cepacia (strain R1808)</name>
    <dbReference type="NCBI Taxonomy" id="269482"/>
    <lineage>
        <taxon>Bacteria</taxon>
        <taxon>Pseudomonadati</taxon>
        <taxon>Pseudomonadota</taxon>
        <taxon>Betaproteobacteria</taxon>
        <taxon>Burkholderiales</taxon>
        <taxon>Burkholderiaceae</taxon>
        <taxon>Burkholderia</taxon>
        <taxon>Burkholderia cepacia complex</taxon>
    </lineage>
</organism>
<keyword id="KW-0963">Cytoplasm</keyword>
<keyword id="KW-0269">Exonuclease</keyword>
<keyword id="KW-0378">Hydrolase</keyword>
<keyword id="KW-0540">Nuclease</keyword>
<sequence>MAKTASPGDTAAGNGTEPLPDKYETALAELESLVARMEGGALSLEDSLAAYRRGAALVAFCQQQLEKVEQQVRVLDGATLKPLSSGTAATDGDDDDL</sequence>
<evidence type="ECO:0000255" key="1">
    <source>
        <dbReference type="HAMAP-Rule" id="MF_00337"/>
    </source>
</evidence>
<evidence type="ECO:0000256" key="2">
    <source>
        <dbReference type="SAM" id="MobiDB-lite"/>
    </source>
</evidence>